<keyword id="KW-1185">Reference proteome</keyword>
<sequence>METVAYIGLGLCVLGVCLISWGLWDLARIIKSLHDTK</sequence>
<proteinExistence type="predicted"/>
<accession>P03799</accession>
<feature type="chain" id="PRO_0000106507" description="Protein 6.3">
    <location>
        <begin position="1"/>
        <end position="37"/>
    </location>
</feature>
<organism>
    <name type="scientific">Escherichia phage T7</name>
    <name type="common">Bacteriophage T7</name>
    <dbReference type="NCBI Taxonomy" id="10760"/>
    <lineage>
        <taxon>Viruses</taxon>
        <taxon>Duplodnaviria</taxon>
        <taxon>Heunggongvirae</taxon>
        <taxon>Uroviricota</taxon>
        <taxon>Caudoviricetes</taxon>
        <taxon>Autographiviridae</taxon>
        <taxon>Studiervirinae</taxon>
        <taxon>Teseptimavirus</taxon>
        <taxon>Teseptimavirus T7</taxon>
    </lineage>
</organism>
<reference key="1">
    <citation type="journal article" date="1983" name="J. Mol. Biol.">
        <title>Complete nucleotide sequence of bacteriophage T7 DNA and the locations of T7 genetic elements.</title>
        <authorList>
            <person name="Dunn J.J."/>
            <person name="Studier F.W."/>
        </authorList>
    </citation>
    <scope>NUCLEOTIDE SEQUENCE [LARGE SCALE GENOMIC DNA]</scope>
</reference>
<name>Y63_BPT7</name>
<protein>
    <recommendedName>
        <fullName>Protein 6.3</fullName>
    </recommendedName>
    <alternativeName>
        <fullName>Gene product 6.3</fullName>
        <shortName>Gp6.3</shortName>
    </alternativeName>
</protein>
<dbReference type="EMBL" id="V01146">
    <property type="protein sequence ID" value="CAA24419.1"/>
    <property type="molecule type" value="Genomic_DNA"/>
</dbReference>
<dbReference type="PIR" id="A04424">
    <property type="entry name" value="Q6BP37"/>
</dbReference>
<dbReference type="RefSeq" id="NP_041989.1">
    <property type="nucleotide sequence ID" value="NC_001604.1"/>
</dbReference>
<dbReference type="SMR" id="P03799"/>
<dbReference type="KEGG" id="vg:1261058"/>
<dbReference type="Proteomes" id="UP000000840">
    <property type="component" value="Genome"/>
</dbReference>
<dbReference type="InterPro" id="IPR035111">
    <property type="entry name" value="DUF5516"/>
</dbReference>
<dbReference type="Pfam" id="PF17637">
    <property type="entry name" value="DUF5516"/>
    <property type="match status" value="1"/>
</dbReference>
<gene>
    <name type="ordered locus">6.3</name>
</gene>
<organismHost>
    <name type="scientific">Escherichia coli</name>
    <dbReference type="NCBI Taxonomy" id="562"/>
</organismHost>